<organism>
    <name type="scientific">Mycoplasma genitalium (strain ATCC 33530 / DSM 19775 / NCTC 10195 / G37)</name>
    <name type="common">Mycoplasmoides genitalium</name>
    <dbReference type="NCBI Taxonomy" id="243273"/>
    <lineage>
        <taxon>Bacteria</taxon>
        <taxon>Bacillati</taxon>
        <taxon>Mycoplasmatota</taxon>
        <taxon>Mycoplasmoidales</taxon>
        <taxon>Mycoplasmoidaceae</taxon>
        <taxon>Mycoplasmoides</taxon>
    </lineage>
</organism>
<comment type="function">
    <text evidence="1">One of the primary rRNA binding proteins, it binds directly to 16S rRNA central domain where it helps coordinate assembly of the platform of the 30S subunit.</text>
</comment>
<comment type="subunit">
    <text evidence="1">Part of the 30S ribosomal subunit. Contacts proteins S5 and S12.</text>
</comment>
<comment type="similarity">
    <text evidence="1">Belongs to the universal ribosomal protein uS8 family.</text>
</comment>
<dbReference type="EMBL" id="L43967">
    <property type="protein sequence ID" value="AAC71383.1"/>
    <property type="molecule type" value="Genomic_DNA"/>
</dbReference>
<dbReference type="PIR" id="C64218">
    <property type="entry name" value="C64218"/>
</dbReference>
<dbReference type="RefSeq" id="WP_010869359.1">
    <property type="nucleotide sequence ID" value="NC_000908.2"/>
</dbReference>
<dbReference type="SMR" id="P47411"/>
<dbReference type="FunCoup" id="P47411">
    <property type="interactions" value="188"/>
</dbReference>
<dbReference type="STRING" id="243273.MG_165"/>
<dbReference type="GeneID" id="88282298"/>
<dbReference type="KEGG" id="mge:MG_165"/>
<dbReference type="eggNOG" id="COG0096">
    <property type="taxonomic scope" value="Bacteria"/>
</dbReference>
<dbReference type="HOGENOM" id="CLU_098428_0_1_14"/>
<dbReference type="InParanoid" id="P47411"/>
<dbReference type="OrthoDB" id="9802617at2"/>
<dbReference type="BioCyc" id="MGEN243273:G1GJ2-189-MONOMER"/>
<dbReference type="Proteomes" id="UP000000807">
    <property type="component" value="Chromosome"/>
</dbReference>
<dbReference type="GO" id="GO:0022627">
    <property type="term" value="C:cytosolic small ribosomal subunit"/>
    <property type="evidence" value="ECO:0000318"/>
    <property type="project" value="GO_Central"/>
</dbReference>
<dbReference type="GO" id="GO:0019843">
    <property type="term" value="F:rRNA binding"/>
    <property type="evidence" value="ECO:0007669"/>
    <property type="project" value="UniProtKB-UniRule"/>
</dbReference>
<dbReference type="GO" id="GO:0003735">
    <property type="term" value="F:structural constituent of ribosome"/>
    <property type="evidence" value="ECO:0000318"/>
    <property type="project" value="GO_Central"/>
</dbReference>
<dbReference type="GO" id="GO:0006412">
    <property type="term" value="P:translation"/>
    <property type="evidence" value="ECO:0007669"/>
    <property type="project" value="UniProtKB-UniRule"/>
</dbReference>
<dbReference type="FunFam" id="3.30.1490.10:FF:000001">
    <property type="entry name" value="30S ribosomal protein S8"/>
    <property type="match status" value="1"/>
</dbReference>
<dbReference type="Gene3D" id="3.30.1370.30">
    <property type="match status" value="1"/>
</dbReference>
<dbReference type="Gene3D" id="3.30.1490.10">
    <property type="match status" value="1"/>
</dbReference>
<dbReference type="HAMAP" id="MF_01302_B">
    <property type="entry name" value="Ribosomal_uS8_B"/>
    <property type="match status" value="1"/>
</dbReference>
<dbReference type="InterPro" id="IPR000630">
    <property type="entry name" value="Ribosomal_uS8"/>
</dbReference>
<dbReference type="InterPro" id="IPR047863">
    <property type="entry name" value="Ribosomal_uS8_CS"/>
</dbReference>
<dbReference type="InterPro" id="IPR035987">
    <property type="entry name" value="Ribosomal_uS8_sf"/>
</dbReference>
<dbReference type="NCBIfam" id="NF001109">
    <property type="entry name" value="PRK00136.1"/>
    <property type="match status" value="1"/>
</dbReference>
<dbReference type="PANTHER" id="PTHR11758">
    <property type="entry name" value="40S RIBOSOMAL PROTEIN S15A"/>
    <property type="match status" value="1"/>
</dbReference>
<dbReference type="Pfam" id="PF00410">
    <property type="entry name" value="Ribosomal_S8"/>
    <property type="match status" value="1"/>
</dbReference>
<dbReference type="SUPFAM" id="SSF56047">
    <property type="entry name" value="Ribosomal protein S8"/>
    <property type="match status" value="1"/>
</dbReference>
<dbReference type="PROSITE" id="PS00053">
    <property type="entry name" value="RIBOSOMAL_S8"/>
    <property type="match status" value="1"/>
</dbReference>
<keyword id="KW-1185">Reference proteome</keyword>
<keyword id="KW-0687">Ribonucleoprotein</keyword>
<keyword id="KW-0689">Ribosomal protein</keyword>
<keyword id="KW-0694">RNA-binding</keyword>
<keyword id="KW-0699">rRNA-binding</keyword>
<accession>P47411</accession>
<name>RS8_MYCGE</name>
<protein>
    <recommendedName>
        <fullName evidence="1">Small ribosomal subunit protein uS8</fullName>
    </recommendedName>
    <alternativeName>
        <fullName evidence="2">30S ribosomal protein S8</fullName>
    </alternativeName>
</protein>
<feature type="chain" id="PRO_0000126439" description="Small ribosomal subunit protein uS8">
    <location>
        <begin position="1"/>
        <end position="141"/>
    </location>
</feature>
<gene>
    <name evidence="1" type="primary">rpsH</name>
    <name evidence="1" type="synonym">rps8</name>
    <name type="ordered locus">MG165</name>
</gene>
<reference key="1">
    <citation type="journal article" date="1995" name="Science">
        <title>The minimal gene complement of Mycoplasma genitalium.</title>
        <authorList>
            <person name="Fraser C.M."/>
            <person name="Gocayne J.D."/>
            <person name="White O."/>
            <person name="Adams M.D."/>
            <person name="Clayton R.A."/>
            <person name="Fleischmann R.D."/>
            <person name="Bult C.J."/>
            <person name="Kerlavage A.R."/>
            <person name="Sutton G.G."/>
            <person name="Kelley J.M."/>
            <person name="Fritchman J.L."/>
            <person name="Weidman J.F."/>
            <person name="Small K.V."/>
            <person name="Sandusky M."/>
            <person name="Fuhrmann J.L."/>
            <person name="Nguyen D.T."/>
            <person name="Utterback T.R."/>
            <person name="Saudek D.M."/>
            <person name="Phillips C.A."/>
            <person name="Merrick J.M."/>
            <person name="Tomb J.-F."/>
            <person name="Dougherty B.A."/>
            <person name="Bott K.F."/>
            <person name="Hu P.-C."/>
            <person name="Lucier T.S."/>
            <person name="Peterson S.N."/>
            <person name="Smith H.O."/>
            <person name="Hutchison C.A. III"/>
            <person name="Venter J.C."/>
        </authorList>
    </citation>
    <scope>NUCLEOTIDE SEQUENCE [LARGE SCALE GENOMIC DNA]</scope>
    <source>
        <strain>ATCC 33530 / DSM 19775 / NCTC 10195 / G37</strain>
    </source>
</reference>
<proteinExistence type="inferred from homology"/>
<evidence type="ECO:0000255" key="1">
    <source>
        <dbReference type="HAMAP-Rule" id="MF_01302"/>
    </source>
</evidence>
<evidence type="ECO:0000305" key="2"/>
<sequence>MIINKVPKAHFDPVSDLFTKINNARKAKLLTVTTIASKLKIAILEILIKEGYLANYQVLENKTKTKKLVSFTLKYTQRRICSINGVKQISKPGLRIYRSFEKLPLVLNGLGIAIISTSDGVMTDKVARLKKIGGEILAYVW</sequence>